<feature type="chain" id="PRO_1000068838" description="Ribosomal protein bS6--L-glutamate ligase">
    <location>
        <begin position="1"/>
        <end position="300"/>
    </location>
</feature>
<feature type="domain" description="ATP-grasp" evidence="1">
    <location>
        <begin position="104"/>
        <end position="287"/>
    </location>
</feature>
<feature type="binding site" evidence="1">
    <location>
        <position position="141"/>
    </location>
    <ligand>
        <name>ATP</name>
        <dbReference type="ChEBI" id="CHEBI:30616"/>
    </ligand>
</feature>
<feature type="binding site" evidence="1">
    <location>
        <begin position="178"/>
        <end position="179"/>
    </location>
    <ligand>
        <name>ATP</name>
        <dbReference type="ChEBI" id="CHEBI:30616"/>
    </ligand>
</feature>
<feature type="binding site" evidence="1">
    <location>
        <position position="187"/>
    </location>
    <ligand>
        <name>ATP</name>
        <dbReference type="ChEBI" id="CHEBI:30616"/>
    </ligand>
</feature>
<feature type="binding site" evidence="1">
    <location>
        <begin position="211"/>
        <end position="213"/>
    </location>
    <ligand>
        <name>ATP</name>
        <dbReference type="ChEBI" id="CHEBI:30616"/>
    </ligand>
</feature>
<feature type="binding site" evidence="1">
    <location>
        <position position="248"/>
    </location>
    <ligand>
        <name>Mg(2+)</name>
        <dbReference type="ChEBI" id="CHEBI:18420"/>
        <label>1</label>
    </ligand>
</feature>
<feature type="binding site" evidence="1">
    <location>
        <position position="248"/>
    </location>
    <ligand>
        <name>Mn(2+)</name>
        <dbReference type="ChEBI" id="CHEBI:29035"/>
        <label>1</label>
    </ligand>
</feature>
<feature type="binding site" evidence="1">
    <location>
        <position position="260"/>
    </location>
    <ligand>
        <name>Mg(2+)</name>
        <dbReference type="ChEBI" id="CHEBI:18420"/>
        <label>1</label>
    </ligand>
</feature>
<feature type="binding site" evidence="1">
    <location>
        <position position="260"/>
    </location>
    <ligand>
        <name>Mg(2+)</name>
        <dbReference type="ChEBI" id="CHEBI:18420"/>
        <label>2</label>
    </ligand>
</feature>
<feature type="binding site" evidence="1">
    <location>
        <position position="260"/>
    </location>
    <ligand>
        <name>Mn(2+)</name>
        <dbReference type="ChEBI" id="CHEBI:29035"/>
        <label>1</label>
    </ligand>
</feature>
<feature type="binding site" evidence="1">
    <location>
        <position position="260"/>
    </location>
    <ligand>
        <name>Mn(2+)</name>
        <dbReference type="ChEBI" id="CHEBI:29035"/>
        <label>2</label>
    </ligand>
</feature>
<feature type="binding site" evidence="1">
    <location>
        <position position="262"/>
    </location>
    <ligand>
        <name>Mg(2+)</name>
        <dbReference type="ChEBI" id="CHEBI:18420"/>
        <label>2</label>
    </ligand>
</feature>
<feature type="binding site" evidence="1">
    <location>
        <position position="262"/>
    </location>
    <ligand>
        <name>Mn(2+)</name>
        <dbReference type="ChEBI" id="CHEBI:29035"/>
        <label>2</label>
    </ligand>
</feature>
<proteinExistence type="inferred from homology"/>
<keyword id="KW-0067">ATP-binding</keyword>
<keyword id="KW-0436">Ligase</keyword>
<keyword id="KW-0460">Magnesium</keyword>
<keyword id="KW-0464">Manganese</keyword>
<keyword id="KW-0479">Metal-binding</keyword>
<keyword id="KW-0547">Nucleotide-binding</keyword>
<keyword id="KW-0648">Protein biosynthesis</keyword>
<reference key="1">
    <citation type="journal article" date="2006" name="Proc. Natl. Acad. Sci. U.S.A.">
        <title>Identification of genes subject to positive selection in uropathogenic strains of Escherichia coli: a comparative genomics approach.</title>
        <authorList>
            <person name="Chen S.L."/>
            <person name="Hung C.-S."/>
            <person name="Xu J."/>
            <person name="Reigstad C.S."/>
            <person name="Magrini V."/>
            <person name="Sabo A."/>
            <person name="Blasiar D."/>
            <person name="Bieri T."/>
            <person name="Meyer R.R."/>
            <person name="Ozersky P."/>
            <person name="Armstrong J.R."/>
            <person name="Fulton R.S."/>
            <person name="Latreille J.P."/>
            <person name="Spieth J."/>
            <person name="Hooton T.M."/>
            <person name="Mardis E.R."/>
            <person name="Hultgren S.J."/>
            <person name="Gordon J.I."/>
        </authorList>
    </citation>
    <scope>NUCLEOTIDE SEQUENCE [LARGE SCALE GENOMIC DNA]</scope>
    <source>
        <strain>UTI89 / UPEC</strain>
    </source>
</reference>
<organism>
    <name type="scientific">Escherichia coli (strain UTI89 / UPEC)</name>
    <dbReference type="NCBI Taxonomy" id="364106"/>
    <lineage>
        <taxon>Bacteria</taxon>
        <taxon>Pseudomonadati</taxon>
        <taxon>Pseudomonadota</taxon>
        <taxon>Gammaproteobacteria</taxon>
        <taxon>Enterobacterales</taxon>
        <taxon>Enterobacteriaceae</taxon>
        <taxon>Escherichia</taxon>
    </lineage>
</organism>
<name>RIMK_ECOUT</name>
<protein>
    <recommendedName>
        <fullName evidence="1">Ribosomal protein bS6--L-glutamate ligase</fullName>
        <ecNumber evidence="1">6.3.2.-</ecNumber>
    </recommendedName>
    <alternativeName>
        <fullName evidence="1">Poly-alpha-glutamate synthase</fullName>
    </alternativeName>
    <alternativeName>
        <fullName evidence="1">Ribosomal protein bS6 modification protein</fullName>
    </alternativeName>
</protein>
<dbReference type="EC" id="6.3.2.-" evidence="1"/>
<dbReference type="EMBL" id="CP000243">
    <property type="protein sequence ID" value="ABE06341.1"/>
    <property type="molecule type" value="Genomic_DNA"/>
</dbReference>
<dbReference type="RefSeq" id="WP_000684321.1">
    <property type="nucleotide sequence ID" value="NZ_CP064825.1"/>
</dbReference>
<dbReference type="SMR" id="Q1RE73"/>
<dbReference type="GeneID" id="93776570"/>
<dbReference type="KEGG" id="eci:UTI89_C0855"/>
<dbReference type="HOGENOM" id="CLU_054353_0_1_6"/>
<dbReference type="Proteomes" id="UP000001952">
    <property type="component" value="Chromosome"/>
</dbReference>
<dbReference type="GO" id="GO:0005737">
    <property type="term" value="C:cytoplasm"/>
    <property type="evidence" value="ECO:0007669"/>
    <property type="project" value="TreeGrafter"/>
</dbReference>
<dbReference type="GO" id="GO:0005524">
    <property type="term" value="F:ATP binding"/>
    <property type="evidence" value="ECO:0007669"/>
    <property type="project" value="UniProtKB-UniRule"/>
</dbReference>
<dbReference type="GO" id="GO:0046872">
    <property type="term" value="F:metal ion binding"/>
    <property type="evidence" value="ECO:0007669"/>
    <property type="project" value="UniProtKB-KW"/>
</dbReference>
<dbReference type="GO" id="GO:0018169">
    <property type="term" value="F:ribosomal S6-glutamic acid ligase activity"/>
    <property type="evidence" value="ECO:0007669"/>
    <property type="project" value="UniProtKB-UniRule"/>
</dbReference>
<dbReference type="GO" id="GO:0036211">
    <property type="term" value="P:protein modification process"/>
    <property type="evidence" value="ECO:0007669"/>
    <property type="project" value="InterPro"/>
</dbReference>
<dbReference type="GO" id="GO:0009432">
    <property type="term" value="P:SOS response"/>
    <property type="evidence" value="ECO:0007669"/>
    <property type="project" value="TreeGrafter"/>
</dbReference>
<dbReference type="GO" id="GO:0006412">
    <property type="term" value="P:translation"/>
    <property type="evidence" value="ECO:0007669"/>
    <property type="project" value="UniProtKB-KW"/>
</dbReference>
<dbReference type="FunFam" id="3.40.50.20:FF:000004">
    <property type="entry name" value="Probable alpha-L-glutamate ligase"/>
    <property type="match status" value="1"/>
</dbReference>
<dbReference type="FunFam" id="3.30.1490.20:FF:000005">
    <property type="entry name" value="Probable alpha-L-glutamate ligase 1"/>
    <property type="match status" value="1"/>
</dbReference>
<dbReference type="FunFam" id="3.30.470.20:FF:000016">
    <property type="entry name" value="Ribosomal protein S6--L-glutamate ligase"/>
    <property type="match status" value="1"/>
</dbReference>
<dbReference type="Gene3D" id="3.40.50.20">
    <property type="match status" value="1"/>
</dbReference>
<dbReference type="Gene3D" id="3.30.1490.20">
    <property type="entry name" value="ATP-grasp fold, A domain"/>
    <property type="match status" value="1"/>
</dbReference>
<dbReference type="Gene3D" id="3.30.470.20">
    <property type="entry name" value="ATP-grasp fold, B domain"/>
    <property type="match status" value="1"/>
</dbReference>
<dbReference type="HAMAP" id="MF_01552">
    <property type="entry name" value="RimK"/>
    <property type="match status" value="1"/>
</dbReference>
<dbReference type="InterPro" id="IPR011761">
    <property type="entry name" value="ATP-grasp"/>
</dbReference>
<dbReference type="InterPro" id="IPR013651">
    <property type="entry name" value="ATP-grasp_RimK-type"/>
</dbReference>
<dbReference type="InterPro" id="IPR013815">
    <property type="entry name" value="ATP_grasp_subdomain_1"/>
</dbReference>
<dbReference type="InterPro" id="IPR023533">
    <property type="entry name" value="RimK"/>
</dbReference>
<dbReference type="InterPro" id="IPR041107">
    <property type="entry name" value="Rimk_N"/>
</dbReference>
<dbReference type="InterPro" id="IPR004666">
    <property type="entry name" value="Rp_bS6_RimK/Lys_biosynth_LsyX"/>
</dbReference>
<dbReference type="NCBIfam" id="NF007764">
    <property type="entry name" value="PRK10446.1"/>
    <property type="match status" value="1"/>
</dbReference>
<dbReference type="NCBIfam" id="TIGR00768">
    <property type="entry name" value="rimK_fam"/>
    <property type="match status" value="1"/>
</dbReference>
<dbReference type="PANTHER" id="PTHR21621:SF7">
    <property type="entry name" value="RIBOSOMAL PROTEIN BS6--L-GLUTAMATE LIGASE"/>
    <property type="match status" value="1"/>
</dbReference>
<dbReference type="PANTHER" id="PTHR21621">
    <property type="entry name" value="RIBOSOMAL PROTEIN S6 MODIFICATION PROTEIN"/>
    <property type="match status" value="1"/>
</dbReference>
<dbReference type="Pfam" id="PF08443">
    <property type="entry name" value="RimK"/>
    <property type="match status" value="1"/>
</dbReference>
<dbReference type="Pfam" id="PF18030">
    <property type="entry name" value="Rimk_N"/>
    <property type="match status" value="1"/>
</dbReference>
<dbReference type="SUPFAM" id="SSF56059">
    <property type="entry name" value="Glutathione synthetase ATP-binding domain-like"/>
    <property type="match status" value="1"/>
</dbReference>
<dbReference type="PROSITE" id="PS50975">
    <property type="entry name" value="ATP_GRASP"/>
    <property type="match status" value="1"/>
</dbReference>
<accession>Q1RE73</accession>
<evidence type="ECO:0000255" key="1">
    <source>
        <dbReference type="HAMAP-Rule" id="MF_01552"/>
    </source>
</evidence>
<comment type="function">
    <text evidence="1">An L-glutamate ligase that catalyzes the ATP-dependent post-translational addition of glutamate residues to the C-terminus of ribosomal protein bS6 (RpsF). Is also able to catalyze the synthesis of poly-alpha-glutamate in vitro, via ATP hydrolysis from unprotected glutamate as substrate. The number of glutamate residues added to either RpsF or to poly-alpha-glutamate changes with pH.</text>
</comment>
<comment type="cofactor">
    <cofactor evidence="1">
        <name>Mg(2+)</name>
        <dbReference type="ChEBI" id="CHEBI:18420"/>
    </cofactor>
    <cofactor evidence="1">
        <name>Mn(2+)</name>
        <dbReference type="ChEBI" id="CHEBI:29035"/>
    </cofactor>
    <text evidence="1">Binds 2 magnesium or manganese ions per subunit.</text>
</comment>
<comment type="similarity">
    <text evidence="1">Belongs to the RimK family.</text>
</comment>
<gene>
    <name evidence="1" type="primary">rimK</name>
    <name type="ordered locus">UTI89_C0855</name>
</gene>
<sequence length="300" mass="32436">MKIAILSRDGTLYSCKRLREAAIQRGHLVEILDPLSCYMNINPAASSIHYKGRKLPHFDAVIPRIGTAITFYGTAALRQFEMLGSYPLNESVAIARARDKLRSMQLLARQGIDLPVTGIAHSPDDTSDLIDMVGGAPLVVKLVEGTQGIGVVLAETRQAAESVIDAFRGLNAHILVQEYIKEAQGCDIRCLVVGDEVVAAIERRAKEGDFRSNLHRGGAASVASITPQEREIAIKAARTMALDVAGVDILRANRGPLVMEVNASPGLEGIEKTTGIDIAGKMIRWIERHATTEYCLKTGG</sequence>